<name>EFG1_BORBR</name>
<proteinExistence type="inferred from homology"/>
<reference key="1">
    <citation type="journal article" date="2003" name="Nat. Genet.">
        <title>Comparative analysis of the genome sequences of Bordetella pertussis, Bordetella parapertussis and Bordetella bronchiseptica.</title>
        <authorList>
            <person name="Parkhill J."/>
            <person name="Sebaihia M."/>
            <person name="Preston A."/>
            <person name="Murphy L.D."/>
            <person name="Thomson N.R."/>
            <person name="Harris D.E."/>
            <person name="Holden M.T.G."/>
            <person name="Churcher C.M."/>
            <person name="Bentley S.D."/>
            <person name="Mungall K.L."/>
            <person name="Cerdeno-Tarraga A.-M."/>
            <person name="Temple L."/>
            <person name="James K.D."/>
            <person name="Harris B."/>
            <person name="Quail M.A."/>
            <person name="Achtman M."/>
            <person name="Atkin R."/>
            <person name="Baker S."/>
            <person name="Basham D."/>
            <person name="Bason N."/>
            <person name="Cherevach I."/>
            <person name="Chillingworth T."/>
            <person name="Collins M."/>
            <person name="Cronin A."/>
            <person name="Davis P."/>
            <person name="Doggett J."/>
            <person name="Feltwell T."/>
            <person name="Goble A."/>
            <person name="Hamlin N."/>
            <person name="Hauser H."/>
            <person name="Holroyd S."/>
            <person name="Jagels K."/>
            <person name="Leather S."/>
            <person name="Moule S."/>
            <person name="Norberczak H."/>
            <person name="O'Neil S."/>
            <person name="Ormond D."/>
            <person name="Price C."/>
            <person name="Rabbinowitsch E."/>
            <person name="Rutter S."/>
            <person name="Sanders M."/>
            <person name="Saunders D."/>
            <person name="Seeger K."/>
            <person name="Sharp S."/>
            <person name="Simmonds M."/>
            <person name="Skelton J."/>
            <person name="Squares R."/>
            <person name="Squares S."/>
            <person name="Stevens K."/>
            <person name="Unwin L."/>
            <person name="Whitehead S."/>
            <person name="Barrell B.G."/>
            <person name="Maskell D.J."/>
        </authorList>
    </citation>
    <scope>NUCLEOTIDE SEQUENCE [LARGE SCALE GENOMIC DNA]</scope>
    <source>
        <strain>ATCC BAA-588 / NCTC 13252 / RB50</strain>
    </source>
</reference>
<feature type="chain" id="PRO_0000091078" description="Elongation factor G 1">
    <location>
        <begin position="1"/>
        <end position="700"/>
    </location>
</feature>
<feature type="domain" description="tr-type G">
    <location>
        <begin position="8"/>
        <end position="290"/>
    </location>
</feature>
<feature type="binding site" evidence="1">
    <location>
        <begin position="17"/>
        <end position="24"/>
    </location>
    <ligand>
        <name>GTP</name>
        <dbReference type="ChEBI" id="CHEBI:37565"/>
    </ligand>
</feature>
<feature type="binding site" evidence="1">
    <location>
        <begin position="88"/>
        <end position="92"/>
    </location>
    <ligand>
        <name>GTP</name>
        <dbReference type="ChEBI" id="CHEBI:37565"/>
    </ligand>
</feature>
<feature type="binding site" evidence="1">
    <location>
        <begin position="142"/>
        <end position="145"/>
    </location>
    <ligand>
        <name>GTP</name>
        <dbReference type="ChEBI" id="CHEBI:37565"/>
    </ligand>
</feature>
<comment type="function">
    <text evidence="1">Catalyzes the GTP-dependent ribosomal translocation step during translation elongation. During this step, the ribosome changes from the pre-translocational (PRE) to the post-translocational (POST) state as the newly formed A-site-bound peptidyl-tRNA and P-site-bound deacylated tRNA move to the P and E sites, respectively. Catalyzes the coordinated movement of the two tRNA molecules, the mRNA and conformational changes in the ribosome.</text>
</comment>
<comment type="subcellular location">
    <subcellularLocation>
        <location evidence="1">Cytoplasm</location>
    </subcellularLocation>
</comment>
<comment type="similarity">
    <text evidence="1">Belongs to the TRAFAC class translation factor GTPase superfamily. Classic translation factor GTPase family. EF-G/EF-2 subfamily.</text>
</comment>
<evidence type="ECO:0000255" key="1">
    <source>
        <dbReference type="HAMAP-Rule" id="MF_00054"/>
    </source>
</evidence>
<sequence length="700" mass="77088">MARKTPIERYRNIGISAHIDAGKTTTTERILFYTGVNHKLGETHDGSATMDWMEQEQERGITITSAATTAFWRGMAGNYPEHRINIIDTPGHVDFTIEVERSMRVLDGACMVYCAVGGVQPQSETVWRQANKYGVPRLAFVNKMDRTGANFFKVYDQLKTRLRANPVPIVIPIGAEDSFTGVVDLVKMKAIIWDEASQGTKFEYGDIPAELEGTANEWREKLVEAAAESSEELMNKYLETGSLDEDDINVALRQRTIAGEIQPMLCGTAFKNKGVQRMLDAVIDYLPSPADIPPVDGQDDDGNPIKRSADDAEKFSALAFKLMSDPFVGQLTFVRVYSGVLKSGDTVYNPIKGKKERIGRLLQMHANNREEIKEVLAGDIAAVVGLKDVTTGETLCDIDSHILLERMEFPEPVISQAVEPKSKADQEKMGLALSRLAQEDPSFRVRSDEESGQTIISGMGELHLEILVDRMRREFGVEANVGKPQVAYRETIRKNCDEVEGKFVKQSGGRGQYGHVVLKLEPLPPGGGYEFVDAIKGGVVPREYIPAVDKGIQETLPAGILAGYPVVDVKATLFFGSYHDVDSNENAFKMAASMAFKEGMRRASPVLLEPMMAVEVETPEDYAGTVMGDLSSRRGMVQGMDDIVGGGKTIKAEVPLAEMFGYATNLRSLTQGRATYTMEFKHYAEAPKNVADEVIAARGK</sequence>
<gene>
    <name evidence="1" type="primary">fusA1</name>
    <name type="ordered locus">BB0026</name>
</gene>
<dbReference type="EMBL" id="BX640437">
    <property type="protein sequence ID" value="CAE30528.1"/>
    <property type="molecule type" value="Genomic_DNA"/>
</dbReference>
<dbReference type="SMR" id="Q7WRC7"/>
<dbReference type="KEGG" id="bbr:BB0026"/>
<dbReference type="eggNOG" id="COG0480">
    <property type="taxonomic scope" value="Bacteria"/>
</dbReference>
<dbReference type="HOGENOM" id="CLU_002794_4_1_4"/>
<dbReference type="Proteomes" id="UP000001027">
    <property type="component" value="Chromosome"/>
</dbReference>
<dbReference type="GO" id="GO:0005737">
    <property type="term" value="C:cytoplasm"/>
    <property type="evidence" value="ECO:0007669"/>
    <property type="project" value="UniProtKB-SubCell"/>
</dbReference>
<dbReference type="GO" id="GO:0005525">
    <property type="term" value="F:GTP binding"/>
    <property type="evidence" value="ECO:0007669"/>
    <property type="project" value="UniProtKB-UniRule"/>
</dbReference>
<dbReference type="GO" id="GO:0003924">
    <property type="term" value="F:GTPase activity"/>
    <property type="evidence" value="ECO:0007669"/>
    <property type="project" value="InterPro"/>
</dbReference>
<dbReference type="GO" id="GO:0097216">
    <property type="term" value="F:guanosine tetraphosphate binding"/>
    <property type="evidence" value="ECO:0007669"/>
    <property type="project" value="UniProtKB-ARBA"/>
</dbReference>
<dbReference type="GO" id="GO:0003746">
    <property type="term" value="F:translation elongation factor activity"/>
    <property type="evidence" value="ECO:0007669"/>
    <property type="project" value="UniProtKB-UniRule"/>
</dbReference>
<dbReference type="GO" id="GO:0032790">
    <property type="term" value="P:ribosome disassembly"/>
    <property type="evidence" value="ECO:0007669"/>
    <property type="project" value="TreeGrafter"/>
</dbReference>
<dbReference type="CDD" id="cd01886">
    <property type="entry name" value="EF-G"/>
    <property type="match status" value="1"/>
</dbReference>
<dbReference type="CDD" id="cd16262">
    <property type="entry name" value="EFG_III"/>
    <property type="match status" value="1"/>
</dbReference>
<dbReference type="CDD" id="cd01434">
    <property type="entry name" value="EFG_mtEFG1_IV"/>
    <property type="match status" value="1"/>
</dbReference>
<dbReference type="CDD" id="cd03713">
    <property type="entry name" value="EFG_mtEFG_C"/>
    <property type="match status" value="1"/>
</dbReference>
<dbReference type="CDD" id="cd04088">
    <property type="entry name" value="EFG_mtEFG_II"/>
    <property type="match status" value="1"/>
</dbReference>
<dbReference type="FunFam" id="2.40.30.10:FF:000006">
    <property type="entry name" value="Elongation factor G"/>
    <property type="match status" value="1"/>
</dbReference>
<dbReference type="FunFam" id="3.30.230.10:FF:000003">
    <property type="entry name" value="Elongation factor G"/>
    <property type="match status" value="1"/>
</dbReference>
<dbReference type="FunFam" id="3.30.70.240:FF:000001">
    <property type="entry name" value="Elongation factor G"/>
    <property type="match status" value="1"/>
</dbReference>
<dbReference type="FunFam" id="3.30.70.870:FF:000001">
    <property type="entry name" value="Elongation factor G"/>
    <property type="match status" value="1"/>
</dbReference>
<dbReference type="FunFam" id="3.40.50.300:FF:000029">
    <property type="entry name" value="Elongation factor G"/>
    <property type="match status" value="1"/>
</dbReference>
<dbReference type="Gene3D" id="3.30.230.10">
    <property type="match status" value="1"/>
</dbReference>
<dbReference type="Gene3D" id="3.30.70.240">
    <property type="match status" value="1"/>
</dbReference>
<dbReference type="Gene3D" id="3.30.70.870">
    <property type="entry name" value="Elongation Factor G (Translational Gtpase), domain 3"/>
    <property type="match status" value="1"/>
</dbReference>
<dbReference type="Gene3D" id="3.40.50.300">
    <property type="entry name" value="P-loop containing nucleotide triphosphate hydrolases"/>
    <property type="match status" value="1"/>
</dbReference>
<dbReference type="Gene3D" id="2.40.30.10">
    <property type="entry name" value="Translation factors"/>
    <property type="match status" value="1"/>
</dbReference>
<dbReference type="HAMAP" id="MF_00054_B">
    <property type="entry name" value="EF_G_EF_2_B"/>
    <property type="match status" value="1"/>
</dbReference>
<dbReference type="InterPro" id="IPR041095">
    <property type="entry name" value="EFG_II"/>
</dbReference>
<dbReference type="InterPro" id="IPR009022">
    <property type="entry name" value="EFG_III"/>
</dbReference>
<dbReference type="InterPro" id="IPR035647">
    <property type="entry name" value="EFG_III/V"/>
</dbReference>
<dbReference type="InterPro" id="IPR047872">
    <property type="entry name" value="EFG_IV"/>
</dbReference>
<dbReference type="InterPro" id="IPR035649">
    <property type="entry name" value="EFG_V"/>
</dbReference>
<dbReference type="InterPro" id="IPR000640">
    <property type="entry name" value="EFG_V-like"/>
</dbReference>
<dbReference type="InterPro" id="IPR004161">
    <property type="entry name" value="EFTu-like_2"/>
</dbReference>
<dbReference type="InterPro" id="IPR031157">
    <property type="entry name" value="G_TR_CS"/>
</dbReference>
<dbReference type="InterPro" id="IPR027417">
    <property type="entry name" value="P-loop_NTPase"/>
</dbReference>
<dbReference type="InterPro" id="IPR020568">
    <property type="entry name" value="Ribosomal_Su5_D2-typ_SF"/>
</dbReference>
<dbReference type="InterPro" id="IPR014721">
    <property type="entry name" value="Ribsml_uS5_D2-typ_fold_subgr"/>
</dbReference>
<dbReference type="InterPro" id="IPR005225">
    <property type="entry name" value="Small_GTP-bd"/>
</dbReference>
<dbReference type="InterPro" id="IPR000795">
    <property type="entry name" value="T_Tr_GTP-bd_dom"/>
</dbReference>
<dbReference type="InterPro" id="IPR009000">
    <property type="entry name" value="Transl_B-barrel_sf"/>
</dbReference>
<dbReference type="InterPro" id="IPR004540">
    <property type="entry name" value="Transl_elong_EFG/EF2"/>
</dbReference>
<dbReference type="InterPro" id="IPR005517">
    <property type="entry name" value="Transl_elong_EFG/EF2_IV"/>
</dbReference>
<dbReference type="NCBIfam" id="TIGR00484">
    <property type="entry name" value="EF-G"/>
    <property type="match status" value="1"/>
</dbReference>
<dbReference type="NCBIfam" id="NF009381">
    <property type="entry name" value="PRK12740.1-5"/>
    <property type="match status" value="1"/>
</dbReference>
<dbReference type="NCBIfam" id="TIGR00231">
    <property type="entry name" value="small_GTP"/>
    <property type="match status" value="1"/>
</dbReference>
<dbReference type="PANTHER" id="PTHR43261:SF1">
    <property type="entry name" value="RIBOSOME-RELEASING FACTOR 2, MITOCHONDRIAL"/>
    <property type="match status" value="1"/>
</dbReference>
<dbReference type="PANTHER" id="PTHR43261">
    <property type="entry name" value="TRANSLATION ELONGATION FACTOR G-RELATED"/>
    <property type="match status" value="1"/>
</dbReference>
<dbReference type="Pfam" id="PF00679">
    <property type="entry name" value="EFG_C"/>
    <property type="match status" value="1"/>
</dbReference>
<dbReference type="Pfam" id="PF14492">
    <property type="entry name" value="EFG_III"/>
    <property type="match status" value="1"/>
</dbReference>
<dbReference type="Pfam" id="PF03764">
    <property type="entry name" value="EFG_IV"/>
    <property type="match status" value="1"/>
</dbReference>
<dbReference type="Pfam" id="PF00009">
    <property type="entry name" value="GTP_EFTU"/>
    <property type="match status" value="1"/>
</dbReference>
<dbReference type="Pfam" id="PF03144">
    <property type="entry name" value="GTP_EFTU_D2"/>
    <property type="match status" value="1"/>
</dbReference>
<dbReference type="PRINTS" id="PR00315">
    <property type="entry name" value="ELONGATNFCT"/>
</dbReference>
<dbReference type="SMART" id="SM00838">
    <property type="entry name" value="EFG_C"/>
    <property type="match status" value="1"/>
</dbReference>
<dbReference type="SMART" id="SM00889">
    <property type="entry name" value="EFG_IV"/>
    <property type="match status" value="1"/>
</dbReference>
<dbReference type="SUPFAM" id="SSF54980">
    <property type="entry name" value="EF-G C-terminal domain-like"/>
    <property type="match status" value="2"/>
</dbReference>
<dbReference type="SUPFAM" id="SSF52540">
    <property type="entry name" value="P-loop containing nucleoside triphosphate hydrolases"/>
    <property type="match status" value="1"/>
</dbReference>
<dbReference type="SUPFAM" id="SSF54211">
    <property type="entry name" value="Ribosomal protein S5 domain 2-like"/>
    <property type="match status" value="1"/>
</dbReference>
<dbReference type="SUPFAM" id="SSF50447">
    <property type="entry name" value="Translation proteins"/>
    <property type="match status" value="1"/>
</dbReference>
<dbReference type="PROSITE" id="PS00301">
    <property type="entry name" value="G_TR_1"/>
    <property type="match status" value="1"/>
</dbReference>
<dbReference type="PROSITE" id="PS51722">
    <property type="entry name" value="G_TR_2"/>
    <property type="match status" value="1"/>
</dbReference>
<organism>
    <name type="scientific">Bordetella bronchiseptica (strain ATCC BAA-588 / NCTC 13252 / RB50)</name>
    <name type="common">Alcaligenes bronchisepticus</name>
    <dbReference type="NCBI Taxonomy" id="257310"/>
    <lineage>
        <taxon>Bacteria</taxon>
        <taxon>Pseudomonadati</taxon>
        <taxon>Pseudomonadota</taxon>
        <taxon>Betaproteobacteria</taxon>
        <taxon>Burkholderiales</taxon>
        <taxon>Alcaligenaceae</taxon>
        <taxon>Bordetella</taxon>
    </lineage>
</organism>
<keyword id="KW-0963">Cytoplasm</keyword>
<keyword id="KW-0251">Elongation factor</keyword>
<keyword id="KW-0342">GTP-binding</keyword>
<keyword id="KW-0547">Nucleotide-binding</keyword>
<keyword id="KW-0648">Protein biosynthesis</keyword>
<protein>
    <recommendedName>
        <fullName evidence="1">Elongation factor G 1</fullName>
        <shortName evidence="1">EF-G 1</shortName>
    </recommendedName>
</protein>
<accession>Q7WRC7</accession>